<name>CHRC1_ONCHC</name>
<comment type="function">
    <text evidence="1">May be involved in carotenoid sequestration within chromoplasts.</text>
</comment>
<comment type="subcellular location">
    <subcellularLocation>
        <location evidence="4">Plastid</location>
        <location evidence="4">Chromoplast</location>
    </subcellularLocation>
</comment>
<comment type="tissue specificity">
    <text evidence="3">Expressed in flower buds and floral lip tissues. Not detected in roots and leaves. Specifically expressed in conical papillate cells of adaxial epidermis of lip tissues.</text>
</comment>
<comment type="similarity">
    <text evidence="4">Belongs to the PAP/fibrillin family.</text>
</comment>
<sequence length="319" mass="34696">MTSIAFWNAFTVNPFPAAARRSPPPLTPFTSGALSPARKPRILEISHPRTLPSFRVQAIAEDEWESEKKALKGVVGSVALAEDETTGADLVVSDLKKKLIDQLFGTDRGLKATSETRAEVNELITQLEAKNPNPAPTEALSLLNGRWILAYTSFAGLFPLLGAESLQQLLKVDEISQTIDSEGFTVQNSVRFVGPFSSTSVTTNAKFEVRSPKRVQIKFEEGIIGTPQLTDSIVIPDKFEFFGQNIDLSPFKGVISSLQDTASSVAKTISSQPPIKFPISNSNAQSWLLTTYLDDELRISRADGGSVFVLIKEGSPLLT</sequence>
<gene>
    <name type="primary">CHRC1</name>
    <name type="synonym">FIB1</name>
</gene>
<proteinExistence type="evidence at transcript level"/>
<evidence type="ECO:0000250" key="1"/>
<evidence type="ECO:0000255" key="2"/>
<evidence type="ECO:0000269" key="3">
    <source>
    </source>
</evidence>
<evidence type="ECO:0000305" key="4"/>
<organism>
    <name type="scientific">Oncidium hybrid cultivar</name>
    <name type="common">Orchid</name>
    <dbReference type="NCBI Taxonomy" id="141207"/>
    <lineage>
        <taxon>Eukaryota</taxon>
        <taxon>Viridiplantae</taxon>
        <taxon>Streptophyta</taxon>
        <taxon>Embryophyta</taxon>
        <taxon>Tracheophyta</taxon>
        <taxon>Spermatophyta</taxon>
        <taxon>Magnoliopsida</taxon>
        <taxon>Liliopsida</taxon>
        <taxon>Asparagales</taxon>
        <taxon>Orchidaceae</taxon>
        <taxon>Epidendroideae</taxon>
        <taxon>Cymbidieae</taxon>
        <taxon>Oncidiinae</taxon>
        <taxon>Oncidium</taxon>
    </lineage>
</organism>
<reference key="1">
    <citation type="journal article" date="2008" name="Biotechnol. Lett.">
        <title>Characterization and promoter activity of chromoplast specific carotenoid associated gene (CHRC) from Oncidium Gower Ramsey.</title>
        <authorList>
            <person name="Chiou C.Y."/>
            <person name="Wu K."/>
            <person name="Yeh K.W."/>
        </authorList>
    </citation>
    <scope>NUCLEOTIDE SEQUENCE [MRNA]</scope>
    <scope>TISSUE SPECIFICITY</scope>
</reference>
<protein>
    <recommendedName>
        <fullName>Chromoplast-specific carotenoid-associated protein C1, chromoplastic</fullName>
        <shortName>OgCHRC1</shortName>
    </recommendedName>
    <alternativeName>
        <fullName>Fibrillin-like protein 1</fullName>
    </alternativeName>
    <alternativeName>
        <fullName>Plastid lipid-associated protein CHRC1</fullName>
    </alternativeName>
</protein>
<feature type="transit peptide" description="Chromoplast" evidence="2">
    <location>
        <begin position="1"/>
        <end position="55"/>
    </location>
</feature>
<feature type="chain" id="PRO_0000426716" description="Chromoplast-specific carotenoid-associated protein C1, chromoplastic">
    <location>
        <begin position="56"/>
        <end position="319"/>
    </location>
</feature>
<dbReference type="EMBL" id="EU583501">
    <property type="protein sequence ID" value="ACC59805.1"/>
    <property type="molecule type" value="mRNA"/>
</dbReference>
<dbReference type="SMR" id="B2LU34"/>
<dbReference type="GO" id="GO:0009509">
    <property type="term" value="C:chromoplast"/>
    <property type="evidence" value="ECO:0007669"/>
    <property type="project" value="UniProtKB-SubCell"/>
</dbReference>
<dbReference type="InterPro" id="IPR039633">
    <property type="entry name" value="PAP"/>
</dbReference>
<dbReference type="InterPro" id="IPR006843">
    <property type="entry name" value="PAP/fibrillin_dom"/>
</dbReference>
<dbReference type="PANTHER" id="PTHR31906">
    <property type="entry name" value="PLASTID-LIPID-ASSOCIATED PROTEIN 4, CHLOROPLASTIC-RELATED"/>
    <property type="match status" value="1"/>
</dbReference>
<dbReference type="Pfam" id="PF04755">
    <property type="entry name" value="PAP_fibrillin"/>
    <property type="match status" value="1"/>
</dbReference>
<keyword id="KW-0957">Chromoplast</keyword>
<keyword id="KW-0934">Plastid</keyword>
<keyword id="KW-0809">Transit peptide</keyword>
<accession>B2LU34</accession>